<comment type="function">
    <text evidence="2">By acting through a filamin-A/F-actin axis, it controls the start of neocortical cell migration from the ventricular zone. May be able to induce the degradation of filamin-A.</text>
</comment>
<comment type="subunit">
    <text evidence="5">Interacts with FLNA. Interacts with RHOD (in GTP-bound form).</text>
</comment>
<comment type="subcellular location">
    <subcellularLocation>
        <location evidence="1 2">Cytoplasm</location>
        <location evidence="1 2">Cytoskeleton</location>
    </subcellularLocation>
</comment>
<comment type="similarity">
    <text evidence="6">Belongs to the FILIP1 family.</text>
</comment>
<comment type="sequence caution" evidence="6">
    <conflict type="erroneous initiation">
        <sequence resource="EMBL-CDS" id="BAB30888"/>
    </conflict>
    <text>Extended N-terminus.</text>
</comment>
<dbReference type="EMBL" id="AC140247">
    <property type="status" value="NOT_ANNOTATED_CDS"/>
    <property type="molecule type" value="Genomic_DNA"/>
</dbReference>
<dbReference type="EMBL" id="AC127318">
    <property type="status" value="NOT_ANNOTATED_CDS"/>
    <property type="molecule type" value="Genomic_DNA"/>
</dbReference>
<dbReference type="EMBL" id="BC125581">
    <property type="protein sequence ID" value="AAI25582.1"/>
    <property type="molecule type" value="mRNA"/>
</dbReference>
<dbReference type="EMBL" id="BC131965">
    <property type="protein sequence ID" value="AAI31966.1"/>
    <property type="molecule type" value="mRNA"/>
</dbReference>
<dbReference type="EMBL" id="AK017709">
    <property type="protein sequence ID" value="BAB30888.1"/>
    <property type="status" value="ALT_INIT"/>
    <property type="molecule type" value="mRNA"/>
</dbReference>
<dbReference type="CCDS" id="CCDS40704.1"/>
<dbReference type="RefSeq" id="NP_001074712.1">
    <property type="nucleotide sequence ID" value="NM_001081243.3"/>
</dbReference>
<dbReference type="RefSeq" id="NP_001344282.1">
    <property type="nucleotide sequence ID" value="NM_001357353.2"/>
</dbReference>
<dbReference type="RefSeq" id="XP_006511505.1">
    <property type="nucleotide sequence ID" value="XM_006511442.3"/>
</dbReference>
<dbReference type="SMR" id="Q9CS72"/>
<dbReference type="FunCoup" id="Q9CS72">
    <property type="interactions" value="172"/>
</dbReference>
<dbReference type="IntAct" id="Q9CS72">
    <property type="interactions" value="1"/>
</dbReference>
<dbReference type="STRING" id="10090.ENSMUSP00000091329"/>
<dbReference type="GlyGen" id="Q9CS72">
    <property type="glycosylation" value="6 sites, 1 O-linked glycan (6 sites)"/>
</dbReference>
<dbReference type="iPTMnet" id="Q9CS72"/>
<dbReference type="PhosphoSitePlus" id="Q9CS72"/>
<dbReference type="jPOST" id="Q9CS72"/>
<dbReference type="PaxDb" id="10090-ENSMUSP00000091329"/>
<dbReference type="PeptideAtlas" id="Q9CS72"/>
<dbReference type="ProteomicsDB" id="271701"/>
<dbReference type="ProteomicsDB" id="334898"/>
<dbReference type="Antibodypedia" id="55048">
    <property type="antibodies" value="39 antibodies from 13 providers"/>
</dbReference>
<dbReference type="Ensembl" id="ENSMUST00000093811.11">
    <property type="protein sequence ID" value="ENSMUSP00000091329.5"/>
    <property type="gene ID" value="ENSMUSG00000034898.18"/>
</dbReference>
<dbReference type="GeneID" id="70598"/>
<dbReference type="KEGG" id="mmu:70598"/>
<dbReference type="AGR" id="MGI:1917848"/>
<dbReference type="CTD" id="27145"/>
<dbReference type="MGI" id="MGI:1917848">
    <property type="gene designation" value="Filip1"/>
</dbReference>
<dbReference type="VEuPathDB" id="HostDB:ENSMUSG00000034898"/>
<dbReference type="eggNOG" id="ENOG502QRWK">
    <property type="taxonomic scope" value="Eukaryota"/>
</dbReference>
<dbReference type="GeneTree" id="ENSGT00950000182852"/>
<dbReference type="HOGENOM" id="CLU_009022_0_0_1"/>
<dbReference type="InParanoid" id="Q9CS72"/>
<dbReference type="OMA" id="ITHEKGP"/>
<dbReference type="OrthoDB" id="8828111at2759"/>
<dbReference type="PhylomeDB" id="Q9CS72"/>
<dbReference type="TreeFam" id="TF331399"/>
<dbReference type="Reactome" id="R-MMU-9013405">
    <property type="pathway name" value="RHOD GTPase cycle"/>
</dbReference>
<dbReference type="BioGRID-ORCS" id="70598">
    <property type="hits" value="2 hits in 78 CRISPR screens"/>
</dbReference>
<dbReference type="ChiTaRS" id="Filip1">
    <property type="organism name" value="mouse"/>
</dbReference>
<dbReference type="PRO" id="PR:Q9CS72"/>
<dbReference type="Proteomes" id="UP000000589">
    <property type="component" value="Chromosome 9"/>
</dbReference>
<dbReference type="RNAct" id="Q9CS72">
    <property type="molecule type" value="protein"/>
</dbReference>
<dbReference type="Bgee" id="ENSMUSG00000034898">
    <property type="expression patterns" value="Expressed in interventricular septum and 152 other cell types or tissues"/>
</dbReference>
<dbReference type="GO" id="GO:0015629">
    <property type="term" value="C:actin cytoskeleton"/>
    <property type="evidence" value="ECO:0007669"/>
    <property type="project" value="Ensembl"/>
</dbReference>
<dbReference type="GO" id="GO:0005737">
    <property type="term" value="C:cytoplasm"/>
    <property type="evidence" value="ECO:0007669"/>
    <property type="project" value="UniProtKB-KW"/>
</dbReference>
<dbReference type="GO" id="GO:0098978">
    <property type="term" value="C:glutamatergic synapse"/>
    <property type="evidence" value="ECO:0000314"/>
    <property type="project" value="SynGO"/>
</dbReference>
<dbReference type="GO" id="GO:0005730">
    <property type="term" value="C:nucleolus"/>
    <property type="evidence" value="ECO:0007669"/>
    <property type="project" value="Ensembl"/>
</dbReference>
<dbReference type="GO" id="GO:0005886">
    <property type="term" value="C:plasma membrane"/>
    <property type="evidence" value="ECO:0007669"/>
    <property type="project" value="Ensembl"/>
</dbReference>
<dbReference type="GO" id="GO:0021987">
    <property type="term" value="P:cerebral cortex development"/>
    <property type="evidence" value="ECO:0000315"/>
    <property type="project" value="MGI"/>
</dbReference>
<dbReference type="GO" id="GO:0022038">
    <property type="term" value="P:corpus callosum development"/>
    <property type="evidence" value="ECO:0000315"/>
    <property type="project" value="MGI"/>
</dbReference>
<dbReference type="GO" id="GO:0099010">
    <property type="term" value="P:modification of postsynaptic structure"/>
    <property type="evidence" value="ECO:0000314"/>
    <property type="project" value="SynGO"/>
</dbReference>
<dbReference type="GO" id="GO:0001764">
    <property type="term" value="P:neuron migration"/>
    <property type="evidence" value="ECO:0000315"/>
    <property type="project" value="MGI"/>
</dbReference>
<dbReference type="InterPro" id="IPR050719">
    <property type="entry name" value="Cortactin-Actin_Reg"/>
</dbReference>
<dbReference type="InterPro" id="IPR019131">
    <property type="entry name" value="Cortactin-binding_p2_N"/>
</dbReference>
<dbReference type="PANTHER" id="PTHR23166:SF3">
    <property type="entry name" value="FILAMIN-A-INTERACTING PROTEIN 1"/>
    <property type="match status" value="1"/>
</dbReference>
<dbReference type="PANTHER" id="PTHR23166">
    <property type="entry name" value="FILAMIN/GPBP-INTERACTING PROTEIN"/>
    <property type="match status" value="1"/>
</dbReference>
<dbReference type="Pfam" id="PF09727">
    <property type="entry name" value="CortBP2"/>
    <property type="match status" value="1"/>
</dbReference>
<proteinExistence type="evidence at protein level"/>
<accession>Q9CS72</accession>
<accession>Q059P4</accession>
<sequence>MRSRNQGGESSSNGHVSCPKPSIISSDGGKGPSEDAKKNKANRKGEDDVMASGTVKRHLKPSGESEKKTKKPLELSKEDLIQLLSIMEGELQAREDVIHMLKTEKTKPEVLEAHYGSAEPEKVLRVLHRDAILAQEKSIGEDVYEKPISELDRLEEKQKETYRRMLEQLLLAEKCHRRTVYELENEKHKHTDYMNKSDDFTNLLEQERERLKKLLEQEKAYQARKEKENAKRLNKLRDELVKLKSFALMLVDERQMHIEQLGLQSQKVQDLTQKLREEEEKLKAITYKSKEDRQKLLKLEVDFEHKASRFSQEHEEMNAKLANQESHNRQLRLKLVGLSQRIEELEETNKSLQKAEEELQELRDKIAKGECGNSSLMAEVESLRKRVLEMEGKDEEITKTEAQCRELKKKLQEEEHHSKELRLEVEKLQKRMSELEKLEEAFSRSKSECTQLHLNLEKEKNLTKDLLNELEVVKSRVKELECSESRLEKVELSLKDDLTKLKSFTVMLVDERKNMMEKIKQEERKVDGLNKNFKVEQGKVMDVTEKLIEESKKLLKLKSEMEEKVYSLTKERDELMGKLRSEEERSCELSCSVDLLKKRLDGIEEVEREINRGRLCKGSEFTCPEDNKIRELTLEIERLKKRLQQLEVVEGDLMKTEDEYDQLEQKFRTEQDKANFLSQQLEEIKHQMAKNKAIEKGEAVSQEAELRHRFRMEEAKSRDLQAEVQALKEKIHELMNKEDQLSQLQVDYSVLQQRFMEEETKNKNMGREVLNLTKELELSKRYSRALRPSGNGRRMVDVPVASTGVQTEAVCGDAAEEETPAVFIRKSFQEENHIMSNLRQVGLKKPMERSSVLDRYPPAANELTMRKSWIPWMRKRENGPSAPQEKGPRPNQGTGHPGELVLAPKQGQPLHIRVTPDHENSTATLEITSPTSEEFFSSTTVIPTLGNQKPRITIIPSPNVMSQKPKSADPTLGPERAMSPVTITTISREKSPEGGRGAFADRPASPIQIMTVSTSAAPPEIAVSPDSQEVPMGRTILKVTPEKQTVPTPMRKYNANANIITTEDNKIHIHLGSQFKRSPGPAAAEGVSPVITVRPVNVTAEKEVSTGTVLRSPRNHLSSRPGANKVTSTITITPVTTSSTRGTQSVSGQDGSSQRPTPTRIPMSKGMKAGKPVVAAPGAGNLTKFQPRAETQSMKIELKKSAASSTASLGGGKG</sequence>
<organism>
    <name type="scientific">Mus musculus</name>
    <name type="common">Mouse</name>
    <dbReference type="NCBI Taxonomy" id="10090"/>
    <lineage>
        <taxon>Eukaryota</taxon>
        <taxon>Metazoa</taxon>
        <taxon>Chordata</taxon>
        <taxon>Craniata</taxon>
        <taxon>Vertebrata</taxon>
        <taxon>Euteleostomi</taxon>
        <taxon>Mammalia</taxon>
        <taxon>Eutheria</taxon>
        <taxon>Euarchontoglires</taxon>
        <taxon>Glires</taxon>
        <taxon>Rodentia</taxon>
        <taxon>Myomorpha</taxon>
        <taxon>Muroidea</taxon>
        <taxon>Muridae</taxon>
        <taxon>Murinae</taxon>
        <taxon>Mus</taxon>
        <taxon>Mus</taxon>
    </lineage>
</organism>
<feature type="chain" id="PRO_0000234541" description="Filamin-A-interacting protein 1">
    <location>
        <begin position="1"/>
        <end position="1214"/>
    </location>
</feature>
<feature type="region of interest" description="Disordered" evidence="4">
    <location>
        <begin position="1"/>
        <end position="73"/>
    </location>
</feature>
<feature type="region of interest" description="Disordered" evidence="4">
    <location>
        <begin position="875"/>
        <end position="898"/>
    </location>
</feature>
<feature type="region of interest" description="Disordered" evidence="4">
    <location>
        <begin position="949"/>
        <end position="976"/>
    </location>
</feature>
<feature type="region of interest" description="Disordered" evidence="4">
    <location>
        <begin position="1104"/>
        <end position="1192"/>
    </location>
</feature>
<feature type="coiled-coil region" evidence="3">
    <location>
        <begin position="192"/>
        <end position="581"/>
    </location>
</feature>
<feature type="coiled-coil region" evidence="3">
    <location>
        <begin position="624"/>
        <end position="778"/>
    </location>
</feature>
<feature type="compositionally biased region" description="Polar residues" evidence="4">
    <location>
        <begin position="1"/>
        <end position="15"/>
    </location>
</feature>
<feature type="compositionally biased region" description="Basic and acidic residues" evidence="4">
    <location>
        <begin position="32"/>
        <end position="47"/>
    </location>
</feature>
<feature type="compositionally biased region" description="Basic and acidic residues" evidence="4">
    <location>
        <begin position="61"/>
        <end position="73"/>
    </location>
</feature>
<feature type="compositionally biased region" description="Low complexity" evidence="4">
    <location>
        <begin position="1126"/>
        <end position="1140"/>
    </location>
</feature>
<feature type="compositionally biased region" description="Polar residues" evidence="4">
    <location>
        <begin position="1141"/>
        <end position="1157"/>
    </location>
</feature>
<feature type="compositionally biased region" description="Low complexity" evidence="4">
    <location>
        <begin position="1169"/>
        <end position="1180"/>
    </location>
</feature>
<feature type="modified residue" description="Phosphoserine" evidence="2">
    <location>
        <position position="138"/>
    </location>
</feature>
<feature type="modified residue" description="Phosphoserine" evidence="8">
    <location>
        <position position="979"/>
    </location>
</feature>
<name>FLIP1_MOUSE</name>
<evidence type="ECO:0000250" key="1">
    <source>
        <dbReference type="UniProtKB" id="Q7Z7B0"/>
    </source>
</evidence>
<evidence type="ECO:0000250" key="2">
    <source>
        <dbReference type="UniProtKB" id="Q8K4T4"/>
    </source>
</evidence>
<evidence type="ECO:0000255" key="3"/>
<evidence type="ECO:0000256" key="4">
    <source>
        <dbReference type="SAM" id="MobiDB-lite"/>
    </source>
</evidence>
<evidence type="ECO:0000269" key="5">
    <source>
    </source>
</evidence>
<evidence type="ECO:0000305" key="6"/>
<evidence type="ECO:0000312" key="7">
    <source>
        <dbReference type="EMBL" id="AAI25582.1"/>
    </source>
</evidence>
<evidence type="ECO:0007744" key="8">
    <source>
    </source>
</evidence>
<protein>
    <recommendedName>
        <fullName>Filamin-A-interacting protein 1</fullName>
        <shortName>FILIP</shortName>
    </recommendedName>
</protein>
<reference key="1">
    <citation type="journal article" date="2009" name="PLoS Biol.">
        <title>Lineage-specific biology revealed by a finished genome assembly of the mouse.</title>
        <authorList>
            <person name="Church D.M."/>
            <person name="Goodstadt L."/>
            <person name="Hillier L.W."/>
            <person name="Zody M.C."/>
            <person name="Goldstein S."/>
            <person name="She X."/>
            <person name="Bult C.J."/>
            <person name="Agarwala R."/>
            <person name="Cherry J.L."/>
            <person name="DiCuccio M."/>
            <person name="Hlavina W."/>
            <person name="Kapustin Y."/>
            <person name="Meric P."/>
            <person name="Maglott D."/>
            <person name="Birtle Z."/>
            <person name="Marques A.C."/>
            <person name="Graves T."/>
            <person name="Zhou S."/>
            <person name="Teague B."/>
            <person name="Potamousis K."/>
            <person name="Churas C."/>
            <person name="Place M."/>
            <person name="Herschleb J."/>
            <person name="Runnheim R."/>
            <person name="Forrest D."/>
            <person name="Amos-Landgraf J."/>
            <person name="Schwartz D.C."/>
            <person name="Cheng Z."/>
            <person name="Lindblad-Toh K."/>
            <person name="Eichler E.E."/>
            <person name="Ponting C.P."/>
        </authorList>
    </citation>
    <scope>NUCLEOTIDE SEQUENCE [LARGE SCALE GENOMIC DNA]</scope>
    <source>
        <strain>C57BL/6J</strain>
    </source>
</reference>
<reference evidence="7" key="2">
    <citation type="journal article" date="2004" name="Genome Res.">
        <title>The status, quality, and expansion of the NIH full-length cDNA project: the Mammalian Gene Collection (MGC).</title>
        <authorList>
            <consortium name="The MGC Project Team"/>
        </authorList>
    </citation>
    <scope>NUCLEOTIDE SEQUENCE [LARGE SCALE MRNA]</scope>
    <source>
        <tissue evidence="7">Brain</tissue>
    </source>
</reference>
<reference key="3">
    <citation type="journal article" date="2005" name="Science">
        <title>The transcriptional landscape of the mammalian genome.</title>
        <authorList>
            <person name="Carninci P."/>
            <person name="Kasukawa T."/>
            <person name="Katayama S."/>
            <person name="Gough J."/>
            <person name="Frith M.C."/>
            <person name="Maeda N."/>
            <person name="Oyama R."/>
            <person name="Ravasi T."/>
            <person name="Lenhard B."/>
            <person name="Wells C."/>
            <person name="Kodzius R."/>
            <person name="Shimokawa K."/>
            <person name="Bajic V.B."/>
            <person name="Brenner S.E."/>
            <person name="Batalov S."/>
            <person name="Forrest A.R."/>
            <person name="Zavolan M."/>
            <person name="Davis M.J."/>
            <person name="Wilming L.G."/>
            <person name="Aidinis V."/>
            <person name="Allen J.E."/>
            <person name="Ambesi-Impiombato A."/>
            <person name="Apweiler R."/>
            <person name="Aturaliya R.N."/>
            <person name="Bailey T.L."/>
            <person name="Bansal M."/>
            <person name="Baxter L."/>
            <person name="Beisel K.W."/>
            <person name="Bersano T."/>
            <person name="Bono H."/>
            <person name="Chalk A.M."/>
            <person name="Chiu K.P."/>
            <person name="Choudhary V."/>
            <person name="Christoffels A."/>
            <person name="Clutterbuck D.R."/>
            <person name="Crowe M.L."/>
            <person name="Dalla E."/>
            <person name="Dalrymple B.P."/>
            <person name="de Bono B."/>
            <person name="Della Gatta G."/>
            <person name="di Bernardo D."/>
            <person name="Down T."/>
            <person name="Engstrom P."/>
            <person name="Fagiolini M."/>
            <person name="Faulkner G."/>
            <person name="Fletcher C.F."/>
            <person name="Fukushima T."/>
            <person name="Furuno M."/>
            <person name="Futaki S."/>
            <person name="Gariboldi M."/>
            <person name="Georgii-Hemming P."/>
            <person name="Gingeras T.R."/>
            <person name="Gojobori T."/>
            <person name="Green R.E."/>
            <person name="Gustincich S."/>
            <person name="Harbers M."/>
            <person name="Hayashi Y."/>
            <person name="Hensch T.K."/>
            <person name="Hirokawa N."/>
            <person name="Hill D."/>
            <person name="Huminiecki L."/>
            <person name="Iacono M."/>
            <person name="Ikeo K."/>
            <person name="Iwama A."/>
            <person name="Ishikawa T."/>
            <person name="Jakt M."/>
            <person name="Kanapin A."/>
            <person name="Katoh M."/>
            <person name="Kawasawa Y."/>
            <person name="Kelso J."/>
            <person name="Kitamura H."/>
            <person name="Kitano H."/>
            <person name="Kollias G."/>
            <person name="Krishnan S.P."/>
            <person name="Kruger A."/>
            <person name="Kummerfeld S.K."/>
            <person name="Kurochkin I.V."/>
            <person name="Lareau L.F."/>
            <person name="Lazarevic D."/>
            <person name="Lipovich L."/>
            <person name="Liu J."/>
            <person name="Liuni S."/>
            <person name="McWilliam S."/>
            <person name="Madan Babu M."/>
            <person name="Madera M."/>
            <person name="Marchionni L."/>
            <person name="Matsuda H."/>
            <person name="Matsuzawa S."/>
            <person name="Miki H."/>
            <person name="Mignone F."/>
            <person name="Miyake S."/>
            <person name="Morris K."/>
            <person name="Mottagui-Tabar S."/>
            <person name="Mulder N."/>
            <person name="Nakano N."/>
            <person name="Nakauchi H."/>
            <person name="Ng P."/>
            <person name="Nilsson R."/>
            <person name="Nishiguchi S."/>
            <person name="Nishikawa S."/>
            <person name="Nori F."/>
            <person name="Ohara O."/>
            <person name="Okazaki Y."/>
            <person name="Orlando V."/>
            <person name="Pang K.C."/>
            <person name="Pavan W.J."/>
            <person name="Pavesi G."/>
            <person name="Pesole G."/>
            <person name="Petrovsky N."/>
            <person name="Piazza S."/>
            <person name="Reed J."/>
            <person name="Reid J.F."/>
            <person name="Ring B.Z."/>
            <person name="Ringwald M."/>
            <person name="Rost B."/>
            <person name="Ruan Y."/>
            <person name="Salzberg S.L."/>
            <person name="Sandelin A."/>
            <person name="Schneider C."/>
            <person name="Schoenbach C."/>
            <person name="Sekiguchi K."/>
            <person name="Semple C.A."/>
            <person name="Seno S."/>
            <person name="Sessa L."/>
            <person name="Sheng Y."/>
            <person name="Shibata Y."/>
            <person name="Shimada H."/>
            <person name="Shimada K."/>
            <person name="Silva D."/>
            <person name="Sinclair B."/>
            <person name="Sperling S."/>
            <person name="Stupka E."/>
            <person name="Sugiura K."/>
            <person name="Sultana R."/>
            <person name="Takenaka Y."/>
            <person name="Taki K."/>
            <person name="Tammoja K."/>
            <person name="Tan S.L."/>
            <person name="Tang S."/>
            <person name="Taylor M.S."/>
            <person name="Tegner J."/>
            <person name="Teichmann S.A."/>
            <person name="Ueda H.R."/>
            <person name="van Nimwegen E."/>
            <person name="Verardo R."/>
            <person name="Wei C.L."/>
            <person name="Yagi K."/>
            <person name="Yamanishi H."/>
            <person name="Zabarovsky E."/>
            <person name="Zhu S."/>
            <person name="Zimmer A."/>
            <person name="Hide W."/>
            <person name="Bult C."/>
            <person name="Grimmond S.M."/>
            <person name="Teasdale R.D."/>
            <person name="Liu E.T."/>
            <person name="Brusic V."/>
            <person name="Quackenbush J."/>
            <person name="Wahlestedt C."/>
            <person name="Mattick J.S."/>
            <person name="Hume D.A."/>
            <person name="Kai C."/>
            <person name="Sasaki D."/>
            <person name="Tomaru Y."/>
            <person name="Fukuda S."/>
            <person name="Kanamori-Katayama M."/>
            <person name="Suzuki M."/>
            <person name="Aoki J."/>
            <person name="Arakawa T."/>
            <person name="Iida J."/>
            <person name="Imamura K."/>
            <person name="Itoh M."/>
            <person name="Kato T."/>
            <person name="Kawaji H."/>
            <person name="Kawagashira N."/>
            <person name="Kawashima T."/>
            <person name="Kojima M."/>
            <person name="Kondo S."/>
            <person name="Konno H."/>
            <person name="Nakano K."/>
            <person name="Ninomiya N."/>
            <person name="Nishio T."/>
            <person name="Okada M."/>
            <person name="Plessy C."/>
            <person name="Shibata K."/>
            <person name="Shiraki T."/>
            <person name="Suzuki S."/>
            <person name="Tagami M."/>
            <person name="Waki K."/>
            <person name="Watahiki A."/>
            <person name="Okamura-Oho Y."/>
            <person name="Suzuki H."/>
            <person name="Kawai J."/>
            <person name="Hayashizaki Y."/>
        </authorList>
    </citation>
    <scope>NUCLEOTIDE SEQUENCE [LARGE SCALE MRNA] OF 1-516</scope>
    <source>
        <strain>C57BL/6J</strain>
    </source>
</reference>
<reference key="4">
    <citation type="journal article" date="2005" name="Anat. Sci. Int.">
        <title>Involvement of filamin A and filamin A-interacting protein (FILIP) in controlling the start and cell shape of radially migrating cortical neurons.</title>
        <authorList>
            <person name="Sato M."/>
            <person name="Nagano T."/>
        </authorList>
    </citation>
    <scope>INTERACTION WITH FLNA</scope>
</reference>
<reference key="5">
    <citation type="journal article" date="2010" name="Cell">
        <title>A tissue-specific atlas of mouse protein phosphorylation and expression.</title>
        <authorList>
            <person name="Huttlin E.L."/>
            <person name="Jedrychowski M.P."/>
            <person name="Elias J.E."/>
            <person name="Goswami T."/>
            <person name="Rad R."/>
            <person name="Beausoleil S.A."/>
            <person name="Villen J."/>
            <person name="Haas W."/>
            <person name="Sowa M.E."/>
            <person name="Gygi S.P."/>
        </authorList>
    </citation>
    <scope>PHOSPHORYLATION [LARGE SCALE ANALYSIS] AT SER-979</scope>
    <scope>IDENTIFICATION BY MASS SPECTROMETRY [LARGE SCALE ANALYSIS]</scope>
    <source>
        <tissue>Heart</tissue>
    </source>
</reference>
<keyword id="KW-0175">Coiled coil</keyword>
<keyword id="KW-0963">Cytoplasm</keyword>
<keyword id="KW-0206">Cytoskeleton</keyword>
<keyword id="KW-0597">Phosphoprotein</keyword>
<keyword id="KW-1185">Reference proteome</keyword>
<gene>
    <name type="primary">Filip1</name>
</gene>